<accession>A9FGE0</accession>
<protein>
    <recommendedName>
        <fullName evidence="1">Adenylate kinase</fullName>
        <shortName evidence="1">AK</shortName>
        <ecNumber evidence="1">2.7.4.3</ecNumber>
    </recommendedName>
    <alternativeName>
        <fullName evidence="1">ATP-AMP transphosphorylase</fullName>
    </alternativeName>
    <alternativeName>
        <fullName evidence="1">ATP:AMP phosphotransferase</fullName>
    </alternativeName>
    <alternativeName>
        <fullName evidence="1">Adenylate monophosphate kinase</fullName>
    </alternativeName>
</protein>
<evidence type="ECO:0000255" key="1">
    <source>
        <dbReference type="HAMAP-Rule" id="MF_00235"/>
    </source>
</evidence>
<sequence length="215" mass="23387">MILVLVGPPGAGKGTQAKLLCARFGIPQISTGDMLREAKRSGTLEKRYLDIMDSGGLLPDEAVIGLIARRTVEPDCSNGFLLDGFPRTVPQADALDELLASANQGGKRIDAVIQLDVARPLLEERLIHRRTDKRSGQIYHLVYNPPPPGAELEHRADDRPEAVAKRLDAYEAMTAALLPFYEQKKLLHRVDGVGKPEEVTHRVLSAIGRPGSGGE</sequence>
<feature type="chain" id="PRO_1000078292" description="Adenylate kinase">
    <location>
        <begin position="1"/>
        <end position="215"/>
    </location>
</feature>
<feature type="region of interest" description="NMP" evidence="1">
    <location>
        <begin position="30"/>
        <end position="58"/>
    </location>
</feature>
<feature type="region of interest" description="LID" evidence="1">
    <location>
        <begin position="128"/>
        <end position="158"/>
    </location>
</feature>
<feature type="binding site" evidence="1">
    <location>
        <begin position="10"/>
        <end position="15"/>
    </location>
    <ligand>
        <name>ATP</name>
        <dbReference type="ChEBI" id="CHEBI:30616"/>
    </ligand>
</feature>
<feature type="binding site" evidence="1">
    <location>
        <position position="31"/>
    </location>
    <ligand>
        <name>AMP</name>
        <dbReference type="ChEBI" id="CHEBI:456215"/>
    </ligand>
</feature>
<feature type="binding site" evidence="1">
    <location>
        <position position="36"/>
    </location>
    <ligand>
        <name>AMP</name>
        <dbReference type="ChEBI" id="CHEBI:456215"/>
    </ligand>
</feature>
<feature type="binding site" evidence="1">
    <location>
        <begin position="56"/>
        <end position="58"/>
    </location>
    <ligand>
        <name>AMP</name>
        <dbReference type="ChEBI" id="CHEBI:456215"/>
    </ligand>
</feature>
<feature type="binding site" evidence="1">
    <location>
        <begin position="84"/>
        <end position="87"/>
    </location>
    <ligand>
        <name>AMP</name>
        <dbReference type="ChEBI" id="CHEBI:456215"/>
    </ligand>
</feature>
<feature type="binding site" evidence="1">
    <location>
        <position position="91"/>
    </location>
    <ligand>
        <name>AMP</name>
        <dbReference type="ChEBI" id="CHEBI:456215"/>
    </ligand>
</feature>
<feature type="binding site" evidence="1">
    <location>
        <position position="129"/>
    </location>
    <ligand>
        <name>ATP</name>
        <dbReference type="ChEBI" id="CHEBI:30616"/>
    </ligand>
</feature>
<feature type="binding site" evidence="1">
    <location>
        <begin position="138"/>
        <end position="139"/>
    </location>
    <ligand>
        <name>ATP</name>
        <dbReference type="ChEBI" id="CHEBI:30616"/>
    </ligand>
</feature>
<feature type="binding site" evidence="1">
    <location>
        <position position="155"/>
    </location>
    <ligand>
        <name>AMP</name>
        <dbReference type="ChEBI" id="CHEBI:456215"/>
    </ligand>
</feature>
<feature type="binding site" evidence="1">
    <location>
        <position position="166"/>
    </location>
    <ligand>
        <name>AMP</name>
        <dbReference type="ChEBI" id="CHEBI:456215"/>
    </ligand>
</feature>
<feature type="binding site" evidence="1">
    <location>
        <position position="194"/>
    </location>
    <ligand>
        <name>ATP</name>
        <dbReference type="ChEBI" id="CHEBI:30616"/>
    </ligand>
</feature>
<reference key="1">
    <citation type="journal article" date="2007" name="Nat. Biotechnol.">
        <title>Complete genome sequence of the myxobacterium Sorangium cellulosum.</title>
        <authorList>
            <person name="Schneiker S."/>
            <person name="Perlova O."/>
            <person name="Kaiser O."/>
            <person name="Gerth K."/>
            <person name="Alici A."/>
            <person name="Altmeyer M.O."/>
            <person name="Bartels D."/>
            <person name="Bekel T."/>
            <person name="Beyer S."/>
            <person name="Bode E."/>
            <person name="Bode H.B."/>
            <person name="Bolten C.J."/>
            <person name="Choudhuri J.V."/>
            <person name="Doss S."/>
            <person name="Elnakady Y.A."/>
            <person name="Frank B."/>
            <person name="Gaigalat L."/>
            <person name="Goesmann A."/>
            <person name="Groeger C."/>
            <person name="Gross F."/>
            <person name="Jelsbak L."/>
            <person name="Jelsbak L."/>
            <person name="Kalinowski J."/>
            <person name="Kegler C."/>
            <person name="Knauber T."/>
            <person name="Konietzny S."/>
            <person name="Kopp M."/>
            <person name="Krause L."/>
            <person name="Krug D."/>
            <person name="Linke B."/>
            <person name="Mahmud T."/>
            <person name="Martinez-Arias R."/>
            <person name="McHardy A.C."/>
            <person name="Merai M."/>
            <person name="Meyer F."/>
            <person name="Mormann S."/>
            <person name="Munoz-Dorado J."/>
            <person name="Perez J."/>
            <person name="Pradella S."/>
            <person name="Rachid S."/>
            <person name="Raddatz G."/>
            <person name="Rosenau F."/>
            <person name="Rueckert C."/>
            <person name="Sasse F."/>
            <person name="Scharfe M."/>
            <person name="Schuster S.C."/>
            <person name="Suen G."/>
            <person name="Treuner-Lange A."/>
            <person name="Velicer G.J."/>
            <person name="Vorholter F.-J."/>
            <person name="Weissman K.J."/>
            <person name="Welch R.D."/>
            <person name="Wenzel S.C."/>
            <person name="Whitworth D.E."/>
            <person name="Wilhelm S."/>
            <person name="Wittmann C."/>
            <person name="Bloecker H."/>
            <person name="Puehler A."/>
            <person name="Mueller R."/>
        </authorList>
    </citation>
    <scope>NUCLEOTIDE SEQUENCE [LARGE SCALE GENOMIC DNA]</scope>
    <source>
        <strain>So ce56</strain>
    </source>
</reference>
<proteinExistence type="inferred from homology"/>
<comment type="function">
    <text evidence="1">Catalyzes the reversible transfer of the terminal phosphate group between ATP and AMP. Plays an important role in cellular energy homeostasis and in adenine nucleotide metabolism.</text>
</comment>
<comment type="catalytic activity">
    <reaction evidence="1">
        <text>AMP + ATP = 2 ADP</text>
        <dbReference type="Rhea" id="RHEA:12973"/>
        <dbReference type="ChEBI" id="CHEBI:30616"/>
        <dbReference type="ChEBI" id="CHEBI:456215"/>
        <dbReference type="ChEBI" id="CHEBI:456216"/>
        <dbReference type="EC" id="2.7.4.3"/>
    </reaction>
</comment>
<comment type="pathway">
    <text evidence="1">Purine metabolism; AMP biosynthesis via salvage pathway; AMP from ADP: step 1/1.</text>
</comment>
<comment type="subunit">
    <text evidence="1">Monomer.</text>
</comment>
<comment type="subcellular location">
    <subcellularLocation>
        <location evidence="1">Cytoplasm</location>
    </subcellularLocation>
</comment>
<comment type="domain">
    <text evidence="1">Consists of three domains, a large central CORE domain and two small peripheral domains, NMPbind and LID, which undergo movements during catalysis. The LID domain closes over the site of phosphoryl transfer upon ATP binding. Assembling and dissambling the active center during each catalytic cycle provides an effective means to prevent ATP hydrolysis.</text>
</comment>
<comment type="similarity">
    <text evidence="1">Belongs to the adenylate kinase family.</text>
</comment>
<dbReference type="EC" id="2.7.4.3" evidence="1"/>
<dbReference type="EMBL" id="AM746676">
    <property type="protein sequence ID" value="CAN98112.1"/>
    <property type="molecule type" value="Genomic_DNA"/>
</dbReference>
<dbReference type="RefSeq" id="WP_012240551.1">
    <property type="nucleotide sequence ID" value="NC_010162.1"/>
</dbReference>
<dbReference type="SMR" id="A9FGE0"/>
<dbReference type="STRING" id="448385.sce7942"/>
<dbReference type="KEGG" id="scl:sce7942"/>
<dbReference type="eggNOG" id="COG0563">
    <property type="taxonomic scope" value="Bacteria"/>
</dbReference>
<dbReference type="HOGENOM" id="CLU_032354_4_1_7"/>
<dbReference type="OrthoDB" id="9805030at2"/>
<dbReference type="BioCyc" id="SCEL448385:SCE_RS40655-MONOMER"/>
<dbReference type="UniPathway" id="UPA00588">
    <property type="reaction ID" value="UER00649"/>
</dbReference>
<dbReference type="Proteomes" id="UP000002139">
    <property type="component" value="Chromosome"/>
</dbReference>
<dbReference type="GO" id="GO:0005737">
    <property type="term" value="C:cytoplasm"/>
    <property type="evidence" value="ECO:0007669"/>
    <property type="project" value="UniProtKB-SubCell"/>
</dbReference>
<dbReference type="GO" id="GO:0004017">
    <property type="term" value="F:adenylate kinase activity"/>
    <property type="evidence" value="ECO:0007669"/>
    <property type="project" value="UniProtKB-UniRule"/>
</dbReference>
<dbReference type="GO" id="GO:0005524">
    <property type="term" value="F:ATP binding"/>
    <property type="evidence" value="ECO:0007669"/>
    <property type="project" value="UniProtKB-UniRule"/>
</dbReference>
<dbReference type="GO" id="GO:0044209">
    <property type="term" value="P:AMP salvage"/>
    <property type="evidence" value="ECO:0007669"/>
    <property type="project" value="UniProtKB-UniRule"/>
</dbReference>
<dbReference type="CDD" id="cd01428">
    <property type="entry name" value="ADK"/>
    <property type="match status" value="1"/>
</dbReference>
<dbReference type="Gene3D" id="3.40.50.300">
    <property type="entry name" value="P-loop containing nucleotide triphosphate hydrolases"/>
    <property type="match status" value="1"/>
</dbReference>
<dbReference type="HAMAP" id="MF_00235">
    <property type="entry name" value="Adenylate_kinase_Adk"/>
    <property type="match status" value="1"/>
</dbReference>
<dbReference type="InterPro" id="IPR006259">
    <property type="entry name" value="Adenyl_kin_sub"/>
</dbReference>
<dbReference type="InterPro" id="IPR000850">
    <property type="entry name" value="Adenylat/UMP-CMP_kin"/>
</dbReference>
<dbReference type="InterPro" id="IPR033690">
    <property type="entry name" value="Adenylat_kinase_CS"/>
</dbReference>
<dbReference type="InterPro" id="IPR036193">
    <property type="entry name" value="ADK_active_lid_dom_sf"/>
</dbReference>
<dbReference type="InterPro" id="IPR027417">
    <property type="entry name" value="P-loop_NTPase"/>
</dbReference>
<dbReference type="NCBIfam" id="TIGR01351">
    <property type="entry name" value="adk"/>
    <property type="match status" value="1"/>
</dbReference>
<dbReference type="NCBIfam" id="NF001381">
    <property type="entry name" value="PRK00279.1-3"/>
    <property type="match status" value="1"/>
</dbReference>
<dbReference type="PANTHER" id="PTHR23359">
    <property type="entry name" value="NUCLEOTIDE KINASE"/>
    <property type="match status" value="1"/>
</dbReference>
<dbReference type="Pfam" id="PF00406">
    <property type="entry name" value="ADK"/>
    <property type="match status" value="1"/>
</dbReference>
<dbReference type="PRINTS" id="PR00094">
    <property type="entry name" value="ADENYLTKNASE"/>
</dbReference>
<dbReference type="SUPFAM" id="SSF57774">
    <property type="entry name" value="Microbial and mitochondrial ADK, insert 'zinc finger' domain"/>
    <property type="match status" value="1"/>
</dbReference>
<dbReference type="SUPFAM" id="SSF52540">
    <property type="entry name" value="P-loop containing nucleoside triphosphate hydrolases"/>
    <property type="match status" value="1"/>
</dbReference>
<dbReference type="PROSITE" id="PS00113">
    <property type="entry name" value="ADENYLATE_KINASE"/>
    <property type="match status" value="1"/>
</dbReference>
<gene>
    <name evidence="1" type="primary">adk</name>
    <name type="ordered locus">sce7942</name>
</gene>
<name>KAD_SORC5</name>
<organism>
    <name type="scientific">Sorangium cellulosum (strain So ce56)</name>
    <name type="common">Polyangium cellulosum (strain So ce56)</name>
    <dbReference type="NCBI Taxonomy" id="448385"/>
    <lineage>
        <taxon>Bacteria</taxon>
        <taxon>Pseudomonadati</taxon>
        <taxon>Myxococcota</taxon>
        <taxon>Polyangia</taxon>
        <taxon>Polyangiales</taxon>
        <taxon>Polyangiaceae</taxon>
        <taxon>Sorangium</taxon>
    </lineage>
</organism>
<keyword id="KW-0067">ATP-binding</keyword>
<keyword id="KW-0963">Cytoplasm</keyword>
<keyword id="KW-0418">Kinase</keyword>
<keyword id="KW-0545">Nucleotide biosynthesis</keyword>
<keyword id="KW-0547">Nucleotide-binding</keyword>
<keyword id="KW-1185">Reference proteome</keyword>
<keyword id="KW-0808">Transferase</keyword>